<name>PDXJ_ALBFT</name>
<protein>
    <recommendedName>
        <fullName evidence="1">Pyridoxine 5'-phosphate synthase</fullName>
        <shortName evidence="1">PNP synthase</shortName>
        <ecNumber evidence="1">2.6.99.2</ecNumber>
    </recommendedName>
</protein>
<sequence>MTTKLSVNLNKVALVRNTRHLGIPSVTRAATLCLQAGANGITVHPRPDERHIRTDDVRDLALLMQAWPDREFNIEGNPLHNLMDVVHGLVEKKLPVHQVTFVPDSEGQFTSDHGWNFPGDASRLRPLIAQAHAWGLRVSLFMDADPAAMAGAQAVGADRVELYTEPYAAAWGTAQQTPQLARFAETARAALKLGLGVNAGHDLNRDNLSAFIQAVPGVAEVSIGHALIADALELGYSATVQAYLRCIAQGRS</sequence>
<reference key="1">
    <citation type="submission" date="2006-02" db="EMBL/GenBank/DDBJ databases">
        <title>Complete sequence of chromosome of Rhodoferax ferrireducens DSM 15236.</title>
        <authorList>
            <person name="Copeland A."/>
            <person name="Lucas S."/>
            <person name="Lapidus A."/>
            <person name="Barry K."/>
            <person name="Detter J.C."/>
            <person name="Glavina del Rio T."/>
            <person name="Hammon N."/>
            <person name="Israni S."/>
            <person name="Pitluck S."/>
            <person name="Brettin T."/>
            <person name="Bruce D."/>
            <person name="Han C."/>
            <person name="Tapia R."/>
            <person name="Gilna P."/>
            <person name="Kiss H."/>
            <person name="Schmutz J."/>
            <person name="Larimer F."/>
            <person name="Land M."/>
            <person name="Kyrpides N."/>
            <person name="Ivanova N."/>
            <person name="Richardson P."/>
        </authorList>
    </citation>
    <scope>NUCLEOTIDE SEQUENCE [LARGE SCALE GENOMIC DNA]</scope>
    <source>
        <strain>ATCC BAA-621 / DSM 15236 / T118</strain>
    </source>
</reference>
<keyword id="KW-0963">Cytoplasm</keyword>
<keyword id="KW-0664">Pyridoxine biosynthesis</keyword>
<keyword id="KW-1185">Reference proteome</keyword>
<keyword id="KW-0808">Transferase</keyword>
<proteinExistence type="inferred from homology"/>
<organism>
    <name type="scientific">Albidiferax ferrireducens (strain ATCC BAA-621 / DSM 15236 / T118)</name>
    <name type="common">Rhodoferax ferrireducens</name>
    <dbReference type="NCBI Taxonomy" id="338969"/>
    <lineage>
        <taxon>Bacteria</taxon>
        <taxon>Pseudomonadati</taxon>
        <taxon>Pseudomonadota</taxon>
        <taxon>Betaproteobacteria</taxon>
        <taxon>Burkholderiales</taxon>
        <taxon>Comamonadaceae</taxon>
        <taxon>Rhodoferax</taxon>
    </lineage>
</organism>
<accession>Q21XM2</accession>
<dbReference type="EC" id="2.6.99.2" evidence="1"/>
<dbReference type="EMBL" id="CP000267">
    <property type="protein sequence ID" value="ABD69481.1"/>
    <property type="molecule type" value="Genomic_DNA"/>
</dbReference>
<dbReference type="RefSeq" id="WP_011464049.1">
    <property type="nucleotide sequence ID" value="NC_007908.1"/>
</dbReference>
<dbReference type="SMR" id="Q21XM2"/>
<dbReference type="STRING" id="338969.Rfer_1752"/>
<dbReference type="KEGG" id="rfr:Rfer_1752"/>
<dbReference type="eggNOG" id="COG0854">
    <property type="taxonomic scope" value="Bacteria"/>
</dbReference>
<dbReference type="HOGENOM" id="CLU_074563_1_0_4"/>
<dbReference type="OrthoDB" id="9806590at2"/>
<dbReference type="UniPathway" id="UPA00244">
    <property type="reaction ID" value="UER00313"/>
</dbReference>
<dbReference type="Proteomes" id="UP000008332">
    <property type="component" value="Chromosome"/>
</dbReference>
<dbReference type="GO" id="GO:0005829">
    <property type="term" value="C:cytosol"/>
    <property type="evidence" value="ECO:0007669"/>
    <property type="project" value="TreeGrafter"/>
</dbReference>
<dbReference type="GO" id="GO:0033856">
    <property type="term" value="F:pyridoxine 5'-phosphate synthase activity"/>
    <property type="evidence" value="ECO:0007669"/>
    <property type="project" value="UniProtKB-EC"/>
</dbReference>
<dbReference type="GO" id="GO:0008615">
    <property type="term" value="P:pyridoxine biosynthetic process"/>
    <property type="evidence" value="ECO:0007669"/>
    <property type="project" value="UniProtKB-UniRule"/>
</dbReference>
<dbReference type="CDD" id="cd00003">
    <property type="entry name" value="PNPsynthase"/>
    <property type="match status" value="1"/>
</dbReference>
<dbReference type="Gene3D" id="3.20.20.70">
    <property type="entry name" value="Aldolase class I"/>
    <property type="match status" value="1"/>
</dbReference>
<dbReference type="HAMAP" id="MF_00279">
    <property type="entry name" value="PdxJ"/>
    <property type="match status" value="1"/>
</dbReference>
<dbReference type="InterPro" id="IPR013785">
    <property type="entry name" value="Aldolase_TIM"/>
</dbReference>
<dbReference type="InterPro" id="IPR004569">
    <property type="entry name" value="PyrdxlP_synth_PdxJ"/>
</dbReference>
<dbReference type="InterPro" id="IPR036130">
    <property type="entry name" value="Pyridoxine-5'_phos_synth"/>
</dbReference>
<dbReference type="NCBIfam" id="TIGR00559">
    <property type="entry name" value="pdxJ"/>
    <property type="match status" value="1"/>
</dbReference>
<dbReference type="NCBIfam" id="NF003626">
    <property type="entry name" value="PRK05265.1-4"/>
    <property type="match status" value="1"/>
</dbReference>
<dbReference type="PANTHER" id="PTHR30456">
    <property type="entry name" value="PYRIDOXINE 5'-PHOSPHATE SYNTHASE"/>
    <property type="match status" value="1"/>
</dbReference>
<dbReference type="PANTHER" id="PTHR30456:SF0">
    <property type="entry name" value="PYRIDOXINE 5'-PHOSPHATE SYNTHASE"/>
    <property type="match status" value="1"/>
</dbReference>
<dbReference type="Pfam" id="PF03740">
    <property type="entry name" value="PdxJ"/>
    <property type="match status" value="1"/>
</dbReference>
<dbReference type="SUPFAM" id="SSF63892">
    <property type="entry name" value="Pyridoxine 5'-phosphate synthase"/>
    <property type="match status" value="1"/>
</dbReference>
<gene>
    <name evidence="1" type="primary">pdxJ</name>
    <name type="ordered locus">Rfer_1752</name>
</gene>
<evidence type="ECO:0000255" key="1">
    <source>
        <dbReference type="HAMAP-Rule" id="MF_00279"/>
    </source>
</evidence>
<comment type="function">
    <text evidence="1">Catalyzes the complicated ring closure reaction between the two acyclic compounds 1-deoxy-D-xylulose-5-phosphate (DXP) and 3-amino-2-oxopropyl phosphate (1-amino-acetone-3-phosphate or AAP) to form pyridoxine 5'-phosphate (PNP) and inorganic phosphate.</text>
</comment>
<comment type="catalytic activity">
    <reaction evidence="1">
        <text>3-amino-2-oxopropyl phosphate + 1-deoxy-D-xylulose 5-phosphate = pyridoxine 5'-phosphate + phosphate + 2 H2O + H(+)</text>
        <dbReference type="Rhea" id="RHEA:15265"/>
        <dbReference type="ChEBI" id="CHEBI:15377"/>
        <dbReference type="ChEBI" id="CHEBI:15378"/>
        <dbReference type="ChEBI" id="CHEBI:43474"/>
        <dbReference type="ChEBI" id="CHEBI:57279"/>
        <dbReference type="ChEBI" id="CHEBI:57792"/>
        <dbReference type="ChEBI" id="CHEBI:58589"/>
        <dbReference type="EC" id="2.6.99.2"/>
    </reaction>
</comment>
<comment type="pathway">
    <text evidence="1">Cofactor biosynthesis; pyridoxine 5'-phosphate biosynthesis; pyridoxine 5'-phosphate from D-erythrose 4-phosphate: step 5/5.</text>
</comment>
<comment type="subunit">
    <text evidence="1">Homooctamer; tetramer of dimers.</text>
</comment>
<comment type="subcellular location">
    <subcellularLocation>
        <location evidence="1">Cytoplasm</location>
    </subcellularLocation>
</comment>
<comment type="similarity">
    <text evidence="1">Belongs to the PNP synthase family.</text>
</comment>
<feature type="chain" id="PRO_1000022397" description="Pyridoxine 5'-phosphate synthase">
    <location>
        <begin position="1"/>
        <end position="252"/>
    </location>
</feature>
<feature type="active site" description="Proton acceptor" evidence="1">
    <location>
        <position position="44"/>
    </location>
</feature>
<feature type="active site" description="Proton acceptor" evidence="1">
    <location>
        <position position="75"/>
    </location>
</feature>
<feature type="active site" description="Proton donor" evidence="1">
    <location>
        <position position="201"/>
    </location>
</feature>
<feature type="binding site" evidence="1">
    <location>
        <position position="8"/>
    </location>
    <ligand>
        <name>3-amino-2-oxopropyl phosphate</name>
        <dbReference type="ChEBI" id="CHEBI:57279"/>
    </ligand>
</feature>
<feature type="binding site" evidence="1">
    <location>
        <position position="19"/>
    </location>
    <ligand>
        <name>3-amino-2-oxopropyl phosphate</name>
        <dbReference type="ChEBI" id="CHEBI:57279"/>
    </ligand>
</feature>
<feature type="binding site" evidence="1">
    <location>
        <position position="46"/>
    </location>
    <ligand>
        <name>1-deoxy-D-xylulose 5-phosphate</name>
        <dbReference type="ChEBI" id="CHEBI:57792"/>
    </ligand>
</feature>
<feature type="binding site" evidence="1">
    <location>
        <position position="51"/>
    </location>
    <ligand>
        <name>1-deoxy-D-xylulose 5-phosphate</name>
        <dbReference type="ChEBI" id="CHEBI:57792"/>
    </ligand>
</feature>
<feature type="binding site" evidence="1">
    <location>
        <position position="110"/>
    </location>
    <ligand>
        <name>1-deoxy-D-xylulose 5-phosphate</name>
        <dbReference type="ChEBI" id="CHEBI:57792"/>
    </ligand>
</feature>
<feature type="binding site" evidence="1">
    <location>
        <position position="202"/>
    </location>
    <ligand>
        <name>3-amino-2-oxopropyl phosphate</name>
        <dbReference type="ChEBI" id="CHEBI:57279"/>
    </ligand>
</feature>
<feature type="binding site" evidence="1">
    <location>
        <begin position="224"/>
        <end position="225"/>
    </location>
    <ligand>
        <name>3-amino-2-oxopropyl phosphate</name>
        <dbReference type="ChEBI" id="CHEBI:57279"/>
    </ligand>
</feature>
<feature type="site" description="Transition state stabilizer" evidence="1">
    <location>
        <position position="161"/>
    </location>
</feature>